<dbReference type="EMBL" id="CT573326">
    <property type="protein sequence ID" value="CAK16106.1"/>
    <property type="molecule type" value="Genomic_DNA"/>
</dbReference>
<dbReference type="RefSeq" id="WP_011534493.1">
    <property type="nucleotide sequence ID" value="NC_008027.1"/>
</dbReference>
<dbReference type="SMR" id="Q1I8C2"/>
<dbReference type="STRING" id="384676.PSEEN3355"/>
<dbReference type="GeneID" id="32806438"/>
<dbReference type="KEGG" id="pen:PSEEN3355"/>
<dbReference type="eggNOG" id="COG3220">
    <property type="taxonomic scope" value="Bacteria"/>
</dbReference>
<dbReference type="HOGENOM" id="CLU_064263_0_0_6"/>
<dbReference type="OrthoDB" id="9763101at2"/>
<dbReference type="Proteomes" id="UP000000658">
    <property type="component" value="Chromosome"/>
</dbReference>
<dbReference type="Gene3D" id="3.20.20.150">
    <property type="entry name" value="Divalent-metal-dependent TIM barrel enzymes"/>
    <property type="match status" value="1"/>
</dbReference>
<dbReference type="HAMAP" id="MF_00697">
    <property type="entry name" value="UPF0276"/>
    <property type="match status" value="1"/>
</dbReference>
<dbReference type="InterPro" id="IPR007801">
    <property type="entry name" value="MbnB/TglH/ChrH"/>
</dbReference>
<dbReference type="InterPro" id="IPR036237">
    <property type="entry name" value="Xyl_isomerase-like_sf"/>
</dbReference>
<dbReference type="NCBIfam" id="NF003818">
    <property type="entry name" value="PRK05409.1"/>
    <property type="match status" value="1"/>
</dbReference>
<dbReference type="PANTHER" id="PTHR42194">
    <property type="entry name" value="UPF0276 PROTEIN HI_1600"/>
    <property type="match status" value="1"/>
</dbReference>
<dbReference type="PANTHER" id="PTHR42194:SF1">
    <property type="entry name" value="UPF0276 PROTEIN HI_1600"/>
    <property type="match status" value="1"/>
</dbReference>
<dbReference type="Pfam" id="PF05114">
    <property type="entry name" value="MbnB_TglH_ChrH"/>
    <property type="match status" value="1"/>
</dbReference>
<dbReference type="SUPFAM" id="SSF51658">
    <property type="entry name" value="Xylose isomerase-like"/>
    <property type="match status" value="1"/>
</dbReference>
<name>Y3355_PSEE4</name>
<proteinExistence type="inferred from homology"/>
<protein>
    <recommendedName>
        <fullName evidence="1">UPF0276 protein PSEEN3355</fullName>
    </recommendedName>
</protein>
<evidence type="ECO:0000255" key="1">
    <source>
        <dbReference type="HAMAP-Rule" id="MF_00697"/>
    </source>
</evidence>
<feature type="chain" id="PRO_1000132337" description="UPF0276 protein PSEEN3355">
    <location>
        <begin position="1"/>
        <end position="277"/>
    </location>
</feature>
<gene>
    <name type="ordered locus">PSEEN3355</name>
</gene>
<sequence length="277" mass="30903">MIDTPLHTGLGLRRGLLPELLEMQAGEVDFLECAPENWIGVGGAFGQKLECLAERFPIACHGLSLSLGGTAPLDEAFLGLTRRFLDRHQVNLYSEHLSYCSDDGHLYDLLPIPFTEEAVHHVSARIRQAQDLLGRRIAVENISYYAAPYQAMSELDFIRAVLDEADCDLLLDVNNVFVNACNHRYEAHAFLAGIPRERVVGMHVAGHYDEAPDLKVDTHGAPVKEDVWALFARACERFGAQPTVLERDFNYPPLAELLAETARIRDLQQRHGGPRHG</sequence>
<organism>
    <name type="scientific">Pseudomonas entomophila (strain L48)</name>
    <dbReference type="NCBI Taxonomy" id="384676"/>
    <lineage>
        <taxon>Bacteria</taxon>
        <taxon>Pseudomonadati</taxon>
        <taxon>Pseudomonadota</taxon>
        <taxon>Gammaproteobacteria</taxon>
        <taxon>Pseudomonadales</taxon>
        <taxon>Pseudomonadaceae</taxon>
        <taxon>Pseudomonas</taxon>
    </lineage>
</organism>
<accession>Q1I8C2</accession>
<reference key="1">
    <citation type="journal article" date="2006" name="Nat. Biotechnol.">
        <title>Complete genome sequence of the entomopathogenic and metabolically versatile soil bacterium Pseudomonas entomophila.</title>
        <authorList>
            <person name="Vodovar N."/>
            <person name="Vallenet D."/>
            <person name="Cruveiller S."/>
            <person name="Rouy Z."/>
            <person name="Barbe V."/>
            <person name="Acosta C."/>
            <person name="Cattolico L."/>
            <person name="Jubin C."/>
            <person name="Lajus A."/>
            <person name="Segurens B."/>
            <person name="Vacherie B."/>
            <person name="Wincker P."/>
            <person name="Weissenbach J."/>
            <person name="Lemaitre B."/>
            <person name="Medigue C."/>
            <person name="Boccard F."/>
        </authorList>
    </citation>
    <scope>NUCLEOTIDE SEQUENCE [LARGE SCALE GENOMIC DNA]</scope>
    <source>
        <strain>L48</strain>
    </source>
</reference>
<comment type="similarity">
    <text evidence="1">Belongs to the UPF0276 family.</text>
</comment>